<name>RL2_PHOV8</name>
<protein>
    <recommendedName>
        <fullName evidence="1">Large ribosomal subunit protein uL2</fullName>
    </recommendedName>
    <alternativeName>
        <fullName evidence="3">50S ribosomal protein L2</fullName>
    </alternativeName>
</protein>
<feature type="chain" id="PRO_0000309871" description="Large ribosomal subunit protein uL2">
    <location>
        <begin position="1"/>
        <end position="273"/>
    </location>
</feature>
<feature type="region of interest" description="Disordered" evidence="2">
    <location>
        <begin position="196"/>
        <end position="273"/>
    </location>
</feature>
<feature type="compositionally biased region" description="Basic residues" evidence="2">
    <location>
        <begin position="209"/>
        <end position="220"/>
    </location>
</feature>
<feature type="compositionally biased region" description="Basic residues" evidence="2">
    <location>
        <begin position="255"/>
        <end position="264"/>
    </location>
</feature>
<keyword id="KW-0687">Ribonucleoprotein</keyword>
<keyword id="KW-0689">Ribosomal protein</keyword>
<keyword id="KW-0694">RNA-binding</keyword>
<keyword id="KW-0699">rRNA-binding</keyword>
<gene>
    <name evidence="1" type="primary">rplB</name>
    <name type="ordered locus">BVU_0802</name>
</gene>
<dbReference type="EMBL" id="CP000139">
    <property type="protein sequence ID" value="ABR38506.1"/>
    <property type="molecule type" value="Genomic_DNA"/>
</dbReference>
<dbReference type="RefSeq" id="WP_005850640.1">
    <property type="nucleotide sequence ID" value="NZ_CAXUAI010000003.1"/>
</dbReference>
<dbReference type="SMR" id="A6KYJ2"/>
<dbReference type="STRING" id="435590.BVU_0802"/>
<dbReference type="PaxDb" id="435590-BVU_0802"/>
<dbReference type="GeneID" id="5301769"/>
<dbReference type="KEGG" id="bvu:BVU_0802"/>
<dbReference type="eggNOG" id="COG0090">
    <property type="taxonomic scope" value="Bacteria"/>
</dbReference>
<dbReference type="HOGENOM" id="CLU_036235_2_1_10"/>
<dbReference type="BioCyc" id="BVUL435590:G1G59-844-MONOMER"/>
<dbReference type="Proteomes" id="UP000002861">
    <property type="component" value="Chromosome"/>
</dbReference>
<dbReference type="GO" id="GO:0015934">
    <property type="term" value="C:large ribosomal subunit"/>
    <property type="evidence" value="ECO:0007669"/>
    <property type="project" value="InterPro"/>
</dbReference>
<dbReference type="GO" id="GO:0019843">
    <property type="term" value="F:rRNA binding"/>
    <property type="evidence" value="ECO:0007669"/>
    <property type="project" value="UniProtKB-UniRule"/>
</dbReference>
<dbReference type="GO" id="GO:0003735">
    <property type="term" value="F:structural constituent of ribosome"/>
    <property type="evidence" value="ECO:0007669"/>
    <property type="project" value="InterPro"/>
</dbReference>
<dbReference type="GO" id="GO:0016740">
    <property type="term" value="F:transferase activity"/>
    <property type="evidence" value="ECO:0007669"/>
    <property type="project" value="InterPro"/>
</dbReference>
<dbReference type="GO" id="GO:0002181">
    <property type="term" value="P:cytoplasmic translation"/>
    <property type="evidence" value="ECO:0007669"/>
    <property type="project" value="TreeGrafter"/>
</dbReference>
<dbReference type="FunFam" id="2.30.30.30:FF:000001">
    <property type="entry name" value="50S ribosomal protein L2"/>
    <property type="match status" value="1"/>
</dbReference>
<dbReference type="FunFam" id="2.40.50.140:FF:000003">
    <property type="entry name" value="50S ribosomal protein L2"/>
    <property type="match status" value="1"/>
</dbReference>
<dbReference type="FunFam" id="4.10.950.10:FF:000001">
    <property type="entry name" value="50S ribosomal protein L2"/>
    <property type="match status" value="1"/>
</dbReference>
<dbReference type="Gene3D" id="2.30.30.30">
    <property type="match status" value="1"/>
</dbReference>
<dbReference type="Gene3D" id="2.40.50.140">
    <property type="entry name" value="Nucleic acid-binding proteins"/>
    <property type="match status" value="1"/>
</dbReference>
<dbReference type="Gene3D" id="4.10.950.10">
    <property type="entry name" value="Ribosomal protein L2, domain 3"/>
    <property type="match status" value="1"/>
</dbReference>
<dbReference type="HAMAP" id="MF_01320_B">
    <property type="entry name" value="Ribosomal_uL2_B"/>
    <property type="match status" value="1"/>
</dbReference>
<dbReference type="InterPro" id="IPR012340">
    <property type="entry name" value="NA-bd_OB-fold"/>
</dbReference>
<dbReference type="InterPro" id="IPR014722">
    <property type="entry name" value="Rib_uL2_dom2"/>
</dbReference>
<dbReference type="InterPro" id="IPR002171">
    <property type="entry name" value="Ribosomal_uL2"/>
</dbReference>
<dbReference type="InterPro" id="IPR005880">
    <property type="entry name" value="Ribosomal_uL2_bac/org-type"/>
</dbReference>
<dbReference type="InterPro" id="IPR022669">
    <property type="entry name" value="Ribosomal_uL2_C"/>
</dbReference>
<dbReference type="InterPro" id="IPR022671">
    <property type="entry name" value="Ribosomal_uL2_CS"/>
</dbReference>
<dbReference type="InterPro" id="IPR014726">
    <property type="entry name" value="Ribosomal_uL2_dom3"/>
</dbReference>
<dbReference type="InterPro" id="IPR022666">
    <property type="entry name" value="Ribosomal_uL2_RNA-bd_dom"/>
</dbReference>
<dbReference type="InterPro" id="IPR008991">
    <property type="entry name" value="Translation_prot_SH3-like_sf"/>
</dbReference>
<dbReference type="NCBIfam" id="TIGR01171">
    <property type="entry name" value="rplB_bact"/>
    <property type="match status" value="1"/>
</dbReference>
<dbReference type="PANTHER" id="PTHR13691:SF5">
    <property type="entry name" value="LARGE RIBOSOMAL SUBUNIT PROTEIN UL2M"/>
    <property type="match status" value="1"/>
</dbReference>
<dbReference type="PANTHER" id="PTHR13691">
    <property type="entry name" value="RIBOSOMAL PROTEIN L2"/>
    <property type="match status" value="1"/>
</dbReference>
<dbReference type="Pfam" id="PF00181">
    <property type="entry name" value="Ribosomal_L2"/>
    <property type="match status" value="1"/>
</dbReference>
<dbReference type="Pfam" id="PF03947">
    <property type="entry name" value="Ribosomal_L2_C"/>
    <property type="match status" value="1"/>
</dbReference>
<dbReference type="PIRSF" id="PIRSF002158">
    <property type="entry name" value="Ribosomal_L2"/>
    <property type="match status" value="1"/>
</dbReference>
<dbReference type="SMART" id="SM01383">
    <property type="entry name" value="Ribosomal_L2"/>
    <property type="match status" value="1"/>
</dbReference>
<dbReference type="SMART" id="SM01382">
    <property type="entry name" value="Ribosomal_L2_C"/>
    <property type="match status" value="1"/>
</dbReference>
<dbReference type="SUPFAM" id="SSF50249">
    <property type="entry name" value="Nucleic acid-binding proteins"/>
    <property type="match status" value="1"/>
</dbReference>
<dbReference type="SUPFAM" id="SSF50104">
    <property type="entry name" value="Translation proteins SH3-like domain"/>
    <property type="match status" value="1"/>
</dbReference>
<dbReference type="PROSITE" id="PS00467">
    <property type="entry name" value="RIBOSOMAL_L2"/>
    <property type="match status" value="1"/>
</dbReference>
<evidence type="ECO:0000255" key="1">
    <source>
        <dbReference type="HAMAP-Rule" id="MF_01320"/>
    </source>
</evidence>
<evidence type="ECO:0000256" key="2">
    <source>
        <dbReference type="SAM" id="MobiDB-lite"/>
    </source>
</evidence>
<evidence type="ECO:0000305" key="3"/>
<organism>
    <name type="scientific">Phocaeicola vulgatus (strain ATCC 8482 / DSM 1447 / JCM 5826 / CCUG 4940 / NBRC 14291 / NCTC 11154)</name>
    <name type="common">Bacteroides vulgatus</name>
    <dbReference type="NCBI Taxonomy" id="435590"/>
    <lineage>
        <taxon>Bacteria</taxon>
        <taxon>Pseudomonadati</taxon>
        <taxon>Bacteroidota</taxon>
        <taxon>Bacteroidia</taxon>
        <taxon>Bacteroidales</taxon>
        <taxon>Bacteroidaceae</taxon>
        <taxon>Phocaeicola</taxon>
    </lineage>
</organism>
<accession>A6KYJ2</accession>
<proteinExistence type="inferred from homology"/>
<comment type="function">
    <text evidence="1">One of the primary rRNA binding proteins. Required for association of the 30S and 50S subunits to form the 70S ribosome, for tRNA binding and peptide bond formation. It has been suggested to have peptidyltransferase activity; this is somewhat controversial. Makes several contacts with the 16S rRNA in the 70S ribosome.</text>
</comment>
<comment type="subunit">
    <text evidence="1">Part of the 50S ribosomal subunit. Forms a bridge to the 30S subunit in the 70S ribosome.</text>
</comment>
<comment type="similarity">
    <text evidence="1">Belongs to the universal ribosomal protein uL2 family.</text>
</comment>
<sequence length="273" mass="29600">MAVRKFKPTTPGQRHKIIGTFEEITASVPEKSLVFGKRSTGGRNNVGKMTMRYMGGGHKRKYRLIDFKRNKDGVPAVVKTIEYDPNRSARIALLFYADGEKRYIIAPNGLQVGSTLVSGANAAPEIGNALPLENIPVGTVIHNIELRPGQGAALVRSAGNFAQLTSREGKYCVIKLPSGEVRQILSACKATIGSVGNSDHGLESSGKAGRTRWMGRRPRNRGVVMNPVDHPMGGGEGRASGGHPRSRTGLYAKGLKTRAPKKQSSKYIIERRK</sequence>
<reference key="1">
    <citation type="journal article" date="2007" name="PLoS Biol.">
        <title>Evolution of symbiotic bacteria in the distal human intestine.</title>
        <authorList>
            <person name="Xu J."/>
            <person name="Mahowald M.A."/>
            <person name="Ley R.E."/>
            <person name="Lozupone C.A."/>
            <person name="Hamady M."/>
            <person name="Martens E.C."/>
            <person name="Henrissat B."/>
            <person name="Coutinho P.M."/>
            <person name="Minx P."/>
            <person name="Latreille P."/>
            <person name="Cordum H."/>
            <person name="Van Brunt A."/>
            <person name="Kim K."/>
            <person name="Fulton R.S."/>
            <person name="Fulton L.A."/>
            <person name="Clifton S.W."/>
            <person name="Wilson R.K."/>
            <person name="Knight R.D."/>
            <person name="Gordon J.I."/>
        </authorList>
    </citation>
    <scope>NUCLEOTIDE SEQUENCE [LARGE SCALE GENOMIC DNA]</scope>
    <source>
        <strain>ATCC 8482 / DSM 1447 / JCM 5826 / CCUG 4940 / NBRC 14291 / NCTC 11154</strain>
    </source>
</reference>